<evidence type="ECO:0000255" key="1">
    <source>
        <dbReference type="HAMAP-Rule" id="MF_01326"/>
    </source>
</evidence>
<evidence type="ECO:0000305" key="2"/>
<keyword id="KW-0687">Ribonucleoprotein</keyword>
<keyword id="KW-0689">Ribosomal protein</keyword>
<keyword id="KW-0694">RNA-binding</keyword>
<keyword id="KW-0699">rRNA-binding</keyword>
<accession>B0RB50</accession>
<sequence length="119" mass="12935">MANIKKGDLVQVITGRTQAKGGDRGKQGRVLSVLVERNRVVVEGVNFVTKHVRVGQTQRGSKTGGIETVEAPIHISNVALVDPESKKPTRVGFRTETVEKDGVSKTVRVRYAKKSGKDL</sequence>
<dbReference type="EMBL" id="AM849034">
    <property type="protein sequence ID" value="CAQ00415.1"/>
    <property type="molecule type" value="Genomic_DNA"/>
</dbReference>
<dbReference type="RefSeq" id="WP_012297760.1">
    <property type="nucleotide sequence ID" value="NZ_MZMN01000003.1"/>
</dbReference>
<dbReference type="SMR" id="B0RB50"/>
<dbReference type="STRING" id="31964.CMS0294"/>
<dbReference type="KEGG" id="cms:CMS0294"/>
<dbReference type="eggNOG" id="COG0198">
    <property type="taxonomic scope" value="Bacteria"/>
</dbReference>
<dbReference type="HOGENOM" id="CLU_093315_2_0_11"/>
<dbReference type="OrthoDB" id="9807419at2"/>
<dbReference type="Proteomes" id="UP000001318">
    <property type="component" value="Chromosome"/>
</dbReference>
<dbReference type="GO" id="GO:1990904">
    <property type="term" value="C:ribonucleoprotein complex"/>
    <property type="evidence" value="ECO:0007669"/>
    <property type="project" value="UniProtKB-KW"/>
</dbReference>
<dbReference type="GO" id="GO:0005840">
    <property type="term" value="C:ribosome"/>
    <property type="evidence" value="ECO:0007669"/>
    <property type="project" value="UniProtKB-KW"/>
</dbReference>
<dbReference type="GO" id="GO:0019843">
    <property type="term" value="F:rRNA binding"/>
    <property type="evidence" value="ECO:0007669"/>
    <property type="project" value="UniProtKB-UniRule"/>
</dbReference>
<dbReference type="GO" id="GO:0003735">
    <property type="term" value="F:structural constituent of ribosome"/>
    <property type="evidence" value="ECO:0007669"/>
    <property type="project" value="InterPro"/>
</dbReference>
<dbReference type="GO" id="GO:0006412">
    <property type="term" value="P:translation"/>
    <property type="evidence" value="ECO:0007669"/>
    <property type="project" value="UniProtKB-UniRule"/>
</dbReference>
<dbReference type="CDD" id="cd06089">
    <property type="entry name" value="KOW_RPL26"/>
    <property type="match status" value="1"/>
</dbReference>
<dbReference type="Gene3D" id="2.30.30.30">
    <property type="match status" value="1"/>
</dbReference>
<dbReference type="HAMAP" id="MF_01326_B">
    <property type="entry name" value="Ribosomal_uL24_B"/>
    <property type="match status" value="1"/>
</dbReference>
<dbReference type="InterPro" id="IPR014722">
    <property type="entry name" value="Rib_uL2_dom2"/>
</dbReference>
<dbReference type="InterPro" id="IPR003256">
    <property type="entry name" value="Ribosomal_uL24"/>
</dbReference>
<dbReference type="InterPro" id="IPR041988">
    <property type="entry name" value="Ribosomal_uL24_KOW"/>
</dbReference>
<dbReference type="InterPro" id="IPR008991">
    <property type="entry name" value="Translation_prot_SH3-like_sf"/>
</dbReference>
<dbReference type="NCBIfam" id="TIGR01079">
    <property type="entry name" value="rplX_bact"/>
    <property type="match status" value="1"/>
</dbReference>
<dbReference type="PANTHER" id="PTHR12903">
    <property type="entry name" value="MITOCHONDRIAL RIBOSOMAL PROTEIN L24"/>
    <property type="match status" value="1"/>
</dbReference>
<dbReference type="Pfam" id="PF17136">
    <property type="entry name" value="ribosomal_L24"/>
    <property type="match status" value="1"/>
</dbReference>
<dbReference type="SUPFAM" id="SSF50104">
    <property type="entry name" value="Translation proteins SH3-like domain"/>
    <property type="match status" value="1"/>
</dbReference>
<gene>
    <name evidence="1" type="primary">rplX</name>
    <name type="ordered locus">CMS0294</name>
</gene>
<reference key="1">
    <citation type="journal article" date="2008" name="J. Bacteriol.">
        <title>Genome of the actinomycete plant pathogen Clavibacter michiganensis subsp. sepedonicus suggests recent niche adaptation.</title>
        <authorList>
            <person name="Bentley S.D."/>
            <person name="Corton C."/>
            <person name="Brown S.E."/>
            <person name="Barron A."/>
            <person name="Clark L."/>
            <person name="Doggett J."/>
            <person name="Harris B."/>
            <person name="Ormond D."/>
            <person name="Quail M.A."/>
            <person name="May G."/>
            <person name="Francis D."/>
            <person name="Knudson D."/>
            <person name="Parkhill J."/>
            <person name="Ishimaru C.A."/>
        </authorList>
    </citation>
    <scope>NUCLEOTIDE SEQUENCE [LARGE SCALE GENOMIC DNA]</scope>
    <source>
        <strain>ATCC 33113 / DSM 20744 / JCM 9667 / LMG 2889 / ICMP 2535 / C-1</strain>
    </source>
</reference>
<comment type="function">
    <text evidence="1">One of two assembly initiator proteins, it binds directly to the 5'-end of the 23S rRNA, where it nucleates assembly of the 50S subunit.</text>
</comment>
<comment type="function">
    <text evidence="1">One of the proteins that surrounds the polypeptide exit tunnel on the outside of the subunit.</text>
</comment>
<comment type="subunit">
    <text evidence="1">Part of the 50S ribosomal subunit.</text>
</comment>
<comment type="similarity">
    <text evidence="1">Belongs to the universal ribosomal protein uL24 family.</text>
</comment>
<feature type="chain" id="PRO_1000086476" description="Large ribosomal subunit protein uL24">
    <location>
        <begin position="1"/>
        <end position="119"/>
    </location>
</feature>
<proteinExistence type="inferred from homology"/>
<name>RL24_CLASE</name>
<protein>
    <recommendedName>
        <fullName evidence="1">Large ribosomal subunit protein uL24</fullName>
    </recommendedName>
    <alternativeName>
        <fullName evidence="2">50S ribosomal protein L24</fullName>
    </alternativeName>
</protein>
<organism>
    <name type="scientific">Clavibacter sepedonicus</name>
    <name type="common">Clavibacter michiganensis subsp. sepedonicus</name>
    <dbReference type="NCBI Taxonomy" id="31964"/>
    <lineage>
        <taxon>Bacteria</taxon>
        <taxon>Bacillati</taxon>
        <taxon>Actinomycetota</taxon>
        <taxon>Actinomycetes</taxon>
        <taxon>Micrococcales</taxon>
        <taxon>Microbacteriaceae</taxon>
        <taxon>Clavibacter</taxon>
    </lineage>
</organism>